<feature type="chain" id="PRO_0000057347" description="tRNA pseudouridine synthase A">
    <location>
        <begin position="1"/>
        <end position="251"/>
    </location>
</feature>
<feature type="active site" description="Nucleophile" evidence="1">
    <location>
        <position position="52"/>
    </location>
</feature>
<feature type="binding site" evidence="1">
    <location>
        <position position="113"/>
    </location>
    <ligand>
        <name>substrate</name>
    </ligand>
</feature>
<proteinExistence type="inferred from homology"/>
<protein>
    <recommendedName>
        <fullName evidence="1">tRNA pseudouridine synthase A</fullName>
        <ecNumber evidence="1">5.4.99.12</ecNumber>
    </recommendedName>
    <alternativeName>
        <fullName evidence="1">tRNA pseudouridine(38-40) synthase</fullName>
    </alternativeName>
    <alternativeName>
        <fullName evidence="1">tRNA pseudouridylate synthase I</fullName>
    </alternativeName>
    <alternativeName>
        <fullName evidence="1">tRNA-uridine isomerase I</fullName>
    </alternativeName>
</protein>
<accession>Q60CV4</accession>
<accession>G0KE39</accession>
<gene>
    <name evidence="1" type="primary">truA</name>
    <name type="ordered locus">BRA1033</name>
    <name type="ordered locus">BS1330_II1025</name>
</gene>
<evidence type="ECO:0000255" key="1">
    <source>
        <dbReference type="HAMAP-Rule" id="MF_00171"/>
    </source>
</evidence>
<dbReference type="EC" id="5.4.99.12" evidence="1"/>
<dbReference type="EMBL" id="AE014292">
    <property type="protein sequence ID" value="AAV28867.1"/>
    <property type="molecule type" value="Genomic_DNA"/>
</dbReference>
<dbReference type="EMBL" id="CP002998">
    <property type="protein sequence ID" value="AEM20477.1"/>
    <property type="molecule type" value="Genomic_DNA"/>
</dbReference>
<dbReference type="RefSeq" id="WP_002965618.1">
    <property type="nucleotide sequence ID" value="NZ_KN046805.1"/>
</dbReference>
<dbReference type="SMR" id="Q60CV4"/>
<dbReference type="GeneID" id="97534918"/>
<dbReference type="KEGG" id="bms:BRA1033"/>
<dbReference type="KEGG" id="bsi:BS1330_II1025"/>
<dbReference type="PATRIC" id="fig|204722.21.peg.1086"/>
<dbReference type="HOGENOM" id="CLU_014673_0_2_5"/>
<dbReference type="PhylomeDB" id="Q60CV4"/>
<dbReference type="Proteomes" id="UP000007104">
    <property type="component" value="Chromosome II"/>
</dbReference>
<dbReference type="GO" id="GO:0003723">
    <property type="term" value="F:RNA binding"/>
    <property type="evidence" value="ECO:0007669"/>
    <property type="project" value="InterPro"/>
</dbReference>
<dbReference type="GO" id="GO:0160147">
    <property type="term" value="F:tRNA pseudouridine(38-40) synthase activity"/>
    <property type="evidence" value="ECO:0007669"/>
    <property type="project" value="UniProtKB-EC"/>
</dbReference>
<dbReference type="GO" id="GO:0031119">
    <property type="term" value="P:tRNA pseudouridine synthesis"/>
    <property type="evidence" value="ECO:0007669"/>
    <property type="project" value="UniProtKB-UniRule"/>
</dbReference>
<dbReference type="CDD" id="cd02570">
    <property type="entry name" value="PseudoU_synth_EcTruA"/>
    <property type="match status" value="1"/>
</dbReference>
<dbReference type="FunFam" id="3.30.70.580:FF:000001">
    <property type="entry name" value="tRNA pseudouridine synthase A"/>
    <property type="match status" value="1"/>
</dbReference>
<dbReference type="Gene3D" id="3.30.70.660">
    <property type="entry name" value="Pseudouridine synthase I, catalytic domain, C-terminal subdomain"/>
    <property type="match status" value="1"/>
</dbReference>
<dbReference type="Gene3D" id="3.30.70.580">
    <property type="entry name" value="Pseudouridine synthase I, catalytic domain, N-terminal subdomain"/>
    <property type="match status" value="1"/>
</dbReference>
<dbReference type="HAMAP" id="MF_00171">
    <property type="entry name" value="TruA"/>
    <property type="match status" value="1"/>
</dbReference>
<dbReference type="InterPro" id="IPR020103">
    <property type="entry name" value="PsdUridine_synth_cat_dom_sf"/>
</dbReference>
<dbReference type="InterPro" id="IPR001406">
    <property type="entry name" value="PsdUridine_synth_TruA"/>
</dbReference>
<dbReference type="InterPro" id="IPR020097">
    <property type="entry name" value="PsdUridine_synth_TruA_a/b_dom"/>
</dbReference>
<dbReference type="InterPro" id="IPR020095">
    <property type="entry name" value="PsdUridine_synth_TruA_C"/>
</dbReference>
<dbReference type="InterPro" id="IPR020094">
    <property type="entry name" value="TruA/RsuA/RluB/E/F_N"/>
</dbReference>
<dbReference type="NCBIfam" id="TIGR00071">
    <property type="entry name" value="hisT_truA"/>
    <property type="match status" value="1"/>
</dbReference>
<dbReference type="PANTHER" id="PTHR11142">
    <property type="entry name" value="PSEUDOURIDYLATE SYNTHASE"/>
    <property type="match status" value="1"/>
</dbReference>
<dbReference type="PANTHER" id="PTHR11142:SF0">
    <property type="entry name" value="TRNA PSEUDOURIDINE SYNTHASE-LIKE 1"/>
    <property type="match status" value="1"/>
</dbReference>
<dbReference type="Pfam" id="PF01416">
    <property type="entry name" value="PseudoU_synth_1"/>
    <property type="match status" value="2"/>
</dbReference>
<dbReference type="PIRSF" id="PIRSF001430">
    <property type="entry name" value="tRNA_psdUrid_synth"/>
    <property type="match status" value="1"/>
</dbReference>
<dbReference type="SUPFAM" id="SSF55120">
    <property type="entry name" value="Pseudouridine synthase"/>
    <property type="match status" value="1"/>
</dbReference>
<sequence length="251" mass="28172">MPRYKLTVEYDGTPYVGWQRQENGHAVQGAIEQAFKKFCGEDLTLSAAGRTDAGVHATAQVAHVDLAKDWGAGKVRDAVNAHLVMADERISILNVEKTTDTFDARFSARARHYLYRIHNRRAPLAVDYQRAWWVQKQLDADAMHEAAQRLLGEHDFTTFRATQCQAKSPVKTLDRLDVTRNGDMVEMRVSARSFLHNQVRSFAGSLMEVGVGRWTADDLQAALEARDRKACGQVAPPYGLYLVGVDYAFPF</sequence>
<comment type="function">
    <text evidence="1">Formation of pseudouridine at positions 38, 39 and 40 in the anticodon stem and loop of transfer RNAs.</text>
</comment>
<comment type="catalytic activity">
    <reaction evidence="1">
        <text>uridine(38/39/40) in tRNA = pseudouridine(38/39/40) in tRNA</text>
        <dbReference type="Rhea" id="RHEA:22376"/>
        <dbReference type="Rhea" id="RHEA-COMP:10085"/>
        <dbReference type="Rhea" id="RHEA-COMP:10087"/>
        <dbReference type="ChEBI" id="CHEBI:65314"/>
        <dbReference type="ChEBI" id="CHEBI:65315"/>
        <dbReference type="EC" id="5.4.99.12"/>
    </reaction>
</comment>
<comment type="subunit">
    <text evidence="1">Homodimer.</text>
</comment>
<comment type="similarity">
    <text evidence="1">Belongs to the tRNA pseudouridine synthase TruA family.</text>
</comment>
<organism>
    <name type="scientific">Brucella suis biovar 1 (strain 1330)</name>
    <dbReference type="NCBI Taxonomy" id="204722"/>
    <lineage>
        <taxon>Bacteria</taxon>
        <taxon>Pseudomonadati</taxon>
        <taxon>Pseudomonadota</taxon>
        <taxon>Alphaproteobacteria</taxon>
        <taxon>Hyphomicrobiales</taxon>
        <taxon>Brucellaceae</taxon>
        <taxon>Brucella/Ochrobactrum group</taxon>
        <taxon>Brucella</taxon>
    </lineage>
</organism>
<reference key="1">
    <citation type="journal article" date="2002" name="Proc. Natl. Acad. Sci. U.S.A.">
        <title>The Brucella suis genome reveals fundamental similarities between animal and plant pathogens and symbionts.</title>
        <authorList>
            <person name="Paulsen I.T."/>
            <person name="Seshadri R."/>
            <person name="Nelson K.E."/>
            <person name="Eisen J.A."/>
            <person name="Heidelberg J.F."/>
            <person name="Read T.D."/>
            <person name="Dodson R.J."/>
            <person name="Umayam L.A."/>
            <person name="Brinkac L.M."/>
            <person name="Beanan M.J."/>
            <person name="Daugherty S.C."/>
            <person name="DeBoy R.T."/>
            <person name="Durkin A.S."/>
            <person name="Kolonay J.F."/>
            <person name="Madupu R."/>
            <person name="Nelson W.C."/>
            <person name="Ayodeji B."/>
            <person name="Kraul M."/>
            <person name="Shetty J."/>
            <person name="Malek J.A."/>
            <person name="Van Aken S.E."/>
            <person name="Riedmuller S."/>
            <person name="Tettelin H."/>
            <person name="Gill S.R."/>
            <person name="White O."/>
            <person name="Salzberg S.L."/>
            <person name="Hoover D.L."/>
            <person name="Lindler L.E."/>
            <person name="Halling S.M."/>
            <person name="Boyle S.M."/>
            <person name="Fraser C.M."/>
        </authorList>
    </citation>
    <scope>NUCLEOTIDE SEQUENCE [LARGE SCALE GENOMIC DNA]</scope>
    <source>
        <strain>1330</strain>
    </source>
</reference>
<reference key="2">
    <citation type="journal article" date="2011" name="J. Bacteriol.">
        <title>Revised genome sequence of Brucella suis 1330.</title>
        <authorList>
            <person name="Tae H."/>
            <person name="Shallom S."/>
            <person name="Settlage R."/>
            <person name="Preston D."/>
            <person name="Adams L.G."/>
            <person name="Garner H.R."/>
        </authorList>
    </citation>
    <scope>NUCLEOTIDE SEQUENCE [LARGE SCALE GENOMIC DNA]</scope>
    <source>
        <strain>1330</strain>
    </source>
</reference>
<name>TRUA_BRUSU</name>
<keyword id="KW-0413">Isomerase</keyword>
<keyword id="KW-0819">tRNA processing</keyword>